<reference key="1">
    <citation type="submission" date="2004-07" db="EMBL/GenBank/DDBJ databases">
        <authorList>
            <consortium name="NIH - Xenopus Gene Collection (XGC) project"/>
        </authorList>
    </citation>
    <scope>NUCLEOTIDE SEQUENCE [LARGE SCALE MRNA]</scope>
</reference>
<evidence type="ECO:0000250" key="1">
    <source>
        <dbReference type="UniProtKB" id="Q99LN9"/>
    </source>
</evidence>
<evidence type="ECO:0000250" key="2">
    <source>
        <dbReference type="UniProtKB" id="Q9BU89"/>
    </source>
</evidence>
<evidence type="ECO:0000255" key="3">
    <source>
        <dbReference type="HAMAP-Rule" id="MF_03101"/>
    </source>
</evidence>
<evidence type="ECO:0000256" key="4">
    <source>
        <dbReference type="SAM" id="MobiDB-lite"/>
    </source>
</evidence>
<accession>Q66KT3</accession>
<dbReference type="EC" id="1.14.99.29" evidence="2 3"/>
<dbReference type="EMBL" id="BC078568">
    <property type="protein sequence ID" value="AAH78568.1"/>
    <property type="molecule type" value="mRNA"/>
</dbReference>
<dbReference type="SMR" id="Q66KT3"/>
<dbReference type="DNASU" id="447153"/>
<dbReference type="KEGG" id="xla:447153"/>
<dbReference type="AGR" id="Xenbase:XB-GENE-6254335"/>
<dbReference type="CTD" id="447153"/>
<dbReference type="Xenbase" id="XB-GENE-6254335">
    <property type="gene designation" value="dohh.L"/>
</dbReference>
<dbReference type="OMA" id="LQEPCSI"/>
<dbReference type="OrthoDB" id="421002at2759"/>
<dbReference type="UniPathway" id="UPA00354"/>
<dbReference type="Proteomes" id="UP000186698">
    <property type="component" value="Chromosome 1L"/>
</dbReference>
<dbReference type="Bgee" id="447153">
    <property type="expression patterns" value="Expressed in oocyte and 19 other cell types or tissues"/>
</dbReference>
<dbReference type="GO" id="GO:0019135">
    <property type="term" value="F:deoxyhypusine monooxygenase activity"/>
    <property type="evidence" value="ECO:0000250"/>
    <property type="project" value="UniProtKB"/>
</dbReference>
<dbReference type="GO" id="GO:0005506">
    <property type="term" value="F:iron ion binding"/>
    <property type="evidence" value="ECO:0000250"/>
    <property type="project" value="UniProtKB"/>
</dbReference>
<dbReference type="GO" id="GO:0008612">
    <property type="term" value="P:peptidyl-lysine modification to peptidyl-hypusine"/>
    <property type="evidence" value="ECO:0000250"/>
    <property type="project" value="UniProtKB"/>
</dbReference>
<dbReference type="FunFam" id="1.25.10.10:FF:000099">
    <property type="entry name" value="Deoxyhypusine hydroxylase"/>
    <property type="match status" value="2"/>
</dbReference>
<dbReference type="Gene3D" id="1.25.10.10">
    <property type="entry name" value="Leucine-rich Repeat Variant"/>
    <property type="match status" value="2"/>
</dbReference>
<dbReference type="HAMAP" id="MF_03101">
    <property type="entry name" value="Deoxyhypusine_hydroxylase"/>
    <property type="match status" value="1"/>
</dbReference>
<dbReference type="InterPro" id="IPR011989">
    <property type="entry name" value="ARM-like"/>
</dbReference>
<dbReference type="InterPro" id="IPR016024">
    <property type="entry name" value="ARM-type_fold"/>
</dbReference>
<dbReference type="InterPro" id="IPR027517">
    <property type="entry name" value="Deoxyhypusine_hydroxylase"/>
</dbReference>
<dbReference type="InterPro" id="IPR021133">
    <property type="entry name" value="HEAT_type_2"/>
</dbReference>
<dbReference type="InterPro" id="IPR004155">
    <property type="entry name" value="PBS_lyase_HEAT"/>
</dbReference>
<dbReference type="PANTHER" id="PTHR12697:SF5">
    <property type="entry name" value="DEOXYHYPUSINE HYDROXYLASE"/>
    <property type="match status" value="1"/>
</dbReference>
<dbReference type="PANTHER" id="PTHR12697">
    <property type="entry name" value="PBS LYASE HEAT-LIKE PROTEIN"/>
    <property type="match status" value="1"/>
</dbReference>
<dbReference type="Pfam" id="PF13646">
    <property type="entry name" value="HEAT_2"/>
    <property type="match status" value="2"/>
</dbReference>
<dbReference type="Pfam" id="PF03130">
    <property type="entry name" value="HEAT_PBS"/>
    <property type="match status" value="1"/>
</dbReference>
<dbReference type="SMART" id="SM00567">
    <property type="entry name" value="EZ_HEAT"/>
    <property type="match status" value="6"/>
</dbReference>
<dbReference type="SUPFAM" id="SSF48371">
    <property type="entry name" value="ARM repeat"/>
    <property type="match status" value="1"/>
</dbReference>
<dbReference type="PROSITE" id="PS50077">
    <property type="entry name" value="HEAT_REPEAT"/>
    <property type="match status" value="1"/>
</dbReference>
<gene>
    <name type="primary">dohh</name>
</gene>
<proteinExistence type="evidence at transcript level"/>
<name>DOHH_XENLA</name>
<organism>
    <name type="scientific">Xenopus laevis</name>
    <name type="common">African clawed frog</name>
    <dbReference type="NCBI Taxonomy" id="8355"/>
    <lineage>
        <taxon>Eukaryota</taxon>
        <taxon>Metazoa</taxon>
        <taxon>Chordata</taxon>
        <taxon>Craniata</taxon>
        <taxon>Vertebrata</taxon>
        <taxon>Euteleostomi</taxon>
        <taxon>Amphibia</taxon>
        <taxon>Batrachia</taxon>
        <taxon>Anura</taxon>
        <taxon>Pipoidea</taxon>
        <taxon>Pipidae</taxon>
        <taxon>Xenopodinae</taxon>
        <taxon>Xenopus</taxon>
        <taxon>Xenopus</taxon>
    </lineage>
</organism>
<feature type="chain" id="PRO_0000248580" description="Deoxyhypusine hydroxylase">
    <location>
        <begin position="1"/>
        <end position="303"/>
    </location>
</feature>
<feature type="repeat" description="HEAT-like PBS-type 1">
    <location>
        <begin position="56"/>
        <end position="82"/>
    </location>
</feature>
<feature type="repeat" description="HEAT-like PBS-type 2">
    <location>
        <begin position="89"/>
        <end position="115"/>
    </location>
</feature>
<feature type="repeat" description="HEAT-like PBS-type 3">
    <location>
        <begin position="176"/>
        <end position="202"/>
    </location>
</feature>
<feature type="repeat" description="HEAT-like PBS-type 4">
    <location>
        <begin position="207"/>
        <end position="233"/>
    </location>
</feature>
<feature type="repeat" description="HEAT-like PBS-type 5">
    <location>
        <begin position="240"/>
        <end position="266"/>
    </location>
</feature>
<feature type="region of interest" description="Disordered" evidence="4">
    <location>
        <begin position="139"/>
        <end position="158"/>
    </location>
</feature>
<feature type="binding site" evidence="2 3">
    <location>
        <position position="58"/>
    </location>
    <ligand>
        <name>Fe cation</name>
        <dbReference type="ChEBI" id="CHEBI:24875"/>
        <label>1</label>
    </ligand>
</feature>
<feature type="binding site" evidence="2 3">
    <location>
        <position position="91"/>
    </location>
    <ligand>
        <name>Fe cation</name>
        <dbReference type="ChEBI" id="CHEBI:24875"/>
        <label>2</label>
    </ligand>
</feature>
<feature type="binding site" evidence="2 3">
    <location>
        <position position="92"/>
    </location>
    <ligand>
        <name>Fe cation</name>
        <dbReference type="ChEBI" id="CHEBI:24875"/>
        <label>2</label>
    </ligand>
</feature>
<feature type="binding site" evidence="2 3">
    <location>
        <position position="209"/>
    </location>
    <ligand>
        <name>Fe cation</name>
        <dbReference type="ChEBI" id="CHEBI:24875"/>
        <label>2</label>
    </ligand>
</feature>
<feature type="binding site" evidence="2 3">
    <location>
        <position position="242"/>
    </location>
    <ligand>
        <name>Fe cation</name>
        <dbReference type="ChEBI" id="CHEBI:24875"/>
        <label>1</label>
    </ligand>
</feature>
<feature type="binding site" evidence="2 3">
    <location>
        <position position="243"/>
    </location>
    <ligand>
        <name>Fe cation</name>
        <dbReference type="ChEBI" id="CHEBI:24875"/>
        <label>1</label>
    </ligand>
</feature>
<protein>
    <recommendedName>
        <fullName evidence="3">Deoxyhypusine hydroxylase</fullName>
        <shortName evidence="3">DOHH</shortName>
        <ecNumber evidence="2 3">1.14.99.29</ecNumber>
    </recommendedName>
    <alternativeName>
        <fullName evidence="3">Deoxyhypusine dioxygenase</fullName>
    </alternativeName>
    <alternativeName>
        <fullName evidence="3">Deoxyhypusine monooxygenase</fullName>
    </alternativeName>
</protein>
<sequence length="303" mass="33385">MAASLSSEVHSLGQLLIDPGKPLPLRFRALFTLRNLGGAEAIDCIGRGFQDESALLKHELAYCLGQMKDRRALPVLKQVLQDRQQEPMVRHEAGEALGAIGDPEVLELLREYAQDPVIEVAETCQLAVSRIEWLQKNPDSPDTNPYLSVDPAPPAEEKDVPTLRATLLDETCPLFHRYRAMFALRNIGGEEAVLALADGLQIGGSLFRHEIGYVLGQMQHKAAVPGLSAALERFEENPMVRHECAEALGSIAHEDCLKALRAHVGDGERVVRESCEVALDMHDYENSGDFQYANGLSQICEQI</sequence>
<comment type="function">
    <text evidence="1 3">Catalyzes the hydroxylation of the N(6)-(4-aminobutyl)-L-lysine intermediate produced by deoxyhypusine synthase/DHPS on a critical lysine of the eukaryotic translation initiation factor 5A/eIF-5A. This is the second step of the post-translational modification of that lysine into an unusual amino acid residue named hypusine. Hypusination is unique to mature eIF-5A factor and is essential for its function.</text>
</comment>
<comment type="catalytic activity">
    <reaction evidence="2 3">
        <text>[eIF5A protein]-deoxyhypusine + AH2 + O2 = [eIF5A protein]-hypusine + A + H2O</text>
        <dbReference type="Rhea" id="RHEA:14101"/>
        <dbReference type="Rhea" id="RHEA-COMP:10144"/>
        <dbReference type="Rhea" id="RHEA-COMP:12592"/>
        <dbReference type="ChEBI" id="CHEBI:13193"/>
        <dbReference type="ChEBI" id="CHEBI:15377"/>
        <dbReference type="ChEBI" id="CHEBI:15379"/>
        <dbReference type="ChEBI" id="CHEBI:17499"/>
        <dbReference type="ChEBI" id="CHEBI:82657"/>
        <dbReference type="ChEBI" id="CHEBI:91175"/>
        <dbReference type="EC" id="1.14.99.29"/>
    </reaction>
</comment>
<comment type="cofactor">
    <cofactor evidence="2 3">
        <name>Fe(2+)</name>
        <dbReference type="ChEBI" id="CHEBI:29033"/>
    </cofactor>
    <text evidence="2 3">Binds 2 Fe(2+) ions per subunit.</text>
</comment>
<comment type="pathway">
    <text evidence="2 3">Protein modification; eIF5A hypusination.</text>
</comment>
<comment type="similarity">
    <text evidence="3">Belongs to the deoxyhypusine hydroxylase family.</text>
</comment>
<keyword id="KW-0386">Hypusine biosynthesis</keyword>
<keyword id="KW-0408">Iron</keyword>
<keyword id="KW-0479">Metal-binding</keyword>
<keyword id="KW-0503">Monooxygenase</keyword>
<keyword id="KW-0560">Oxidoreductase</keyword>
<keyword id="KW-1185">Reference proteome</keyword>
<keyword id="KW-0677">Repeat</keyword>